<comment type="function">
    <text evidence="1">Catalyzes the NADPH-dependent reduction of 7-cyano-7-deazaguanine (preQ0) to 7-aminomethyl-7-deazaguanine (preQ1).</text>
</comment>
<comment type="catalytic activity">
    <reaction evidence="1">
        <text>7-aminomethyl-7-carbaguanine + 2 NADP(+) = 7-cyano-7-deazaguanine + 2 NADPH + 3 H(+)</text>
        <dbReference type="Rhea" id="RHEA:13409"/>
        <dbReference type="ChEBI" id="CHEBI:15378"/>
        <dbReference type="ChEBI" id="CHEBI:45075"/>
        <dbReference type="ChEBI" id="CHEBI:57783"/>
        <dbReference type="ChEBI" id="CHEBI:58349"/>
        <dbReference type="ChEBI" id="CHEBI:58703"/>
        <dbReference type="EC" id="1.7.1.13"/>
    </reaction>
</comment>
<comment type="pathway">
    <text evidence="1">tRNA modification; tRNA-queuosine biosynthesis.</text>
</comment>
<comment type="subunit">
    <text evidence="1">Homodimer.</text>
</comment>
<comment type="subcellular location">
    <subcellularLocation>
        <location evidence="1">Cytoplasm</location>
    </subcellularLocation>
</comment>
<comment type="similarity">
    <text evidence="1">Belongs to the GTP cyclohydrolase I family. QueF type 2 subfamily.</text>
</comment>
<name>QUEF_SHIB3</name>
<feature type="chain" id="PRO_1000213084" description="NADPH-dependent 7-cyano-7-deazaguanine reductase">
    <location>
        <begin position="1"/>
        <end position="282"/>
    </location>
</feature>
<feature type="active site" description="Thioimide intermediate" evidence="1">
    <location>
        <position position="190"/>
    </location>
</feature>
<feature type="active site" description="Proton donor" evidence="1">
    <location>
        <position position="197"/>
    </location>
</feature>
<feature type="binding site" evidence="1">
    <location>
        <begin position="88"/>
        <end position="90"/>
    </location>
    <ligand>
        <name>substrate</name>
    </ligand>
</feature>
<feature type="binding site" evidence="1">
    <location>
        <begin position="90"/>
        <end position="91"/>
    </location>
    <ligand>
        <name>NADPH</name>
        <dbReference type="ChEBI" id="CHEBI:57783"/>
    </ligand>
</feature>
<feature type="binding site" evidence="1">
    <location>
        <begin position="229"/>
        <end position="230"/>
    </location>
    <ligand>
        <name>substrate</name>
    </ligand>
</feature>
<feature type="binding site" evidence="1">
    <location>
        <begin position="258"/>
        <end position="259"/>
    </location>
    <ligand>
        <name>NADPH</name>
        <dbReference type="ChEBI" id="CHEBI:57783"/>
    </ligand>
</feature>
<gene>
    <name evidence="1" type="primary">queF</name>
    <name type="ordered locus">SbBS512_E3078</name>
</gene>
<protein>
    <recommendedName>
        <fullName evidence="1">NADPH-dependent 7-cyano-7-deazaguanine reductase</fullName>
        <ecNumber evidence="1">1.7.1.13</ecNumber>
    </recommendedName>
    <alternativeName>
        <fullName evidence="1">7-cyano-7-carbaguanine reductase</fullName>
    </alternativeName>
    <alternativeName>
        <fullName evidence="1">NADPH-dependent nitrile oxidoreductase</fullName>
    </alternativeName>
    <alternativeName>
        <fullName evidence="1">PreQ(0) reductase</fullName>
    </alternativeName>
</protein>
<accession>B2TZD9</accession>
<proteinExistence type="inferred from homology"/>
<reference key="1">
    <citation type="submission" date="2008-05" db="EMBL/GenBank/DDBJ databases">
        <title>Complete sequence of Shigella boydii serotype 18 strain BS512.</title>
        <authorList>
            <person name="Rasko D.A."/>
            <person name="Rosovitz M."/>
            <person name="Maurelli A.T."/>
            <person name="Myers G."/>
            <person name="Seshadri R."/>
            <person name="Cer R."/>
            <person name="Jiang L."/>
            <person name="Ravel J."/>
            <person name="Sebastian Y."/>
        </authorList>
    </citation>
    <scope>NUCLEOTIDE SEQUENCE [LARGE SCALE GENOMIC DNA]</scope>
    <source>
        <strain>CDC 3083-94 / BS512</strain>
    </source>
</reference>
<sequence length="282" mass="32588">MSSYANHQALAGLTLGKSTDYRDTYDASLLQGVPRSLNRDPLGLKADNLPFHGTDIWTLYELSWLNAKGLPQVAVGHVELDYTSVNLIESKSFKLYLNSFNQTRFNNWDEVRQTLERDLSTCAQGKISVALYRLDELEGQPIGHFNGTCIDDQDITIDNYEFTTDYLENATCGEKVVEETLVSHLLKSNCLITHQPDWGSIQIQYRGRQIDREKLLRYLVSFRHHNEFHEQCVERIFNDLLRFCQPEKLSVYARYTRRGGLDINPWRSNSDFVPSTTRLVRQ</sequence>
<organism>
    <name type="scientific">Shigella boydii serotype 18 (strain CDC 3083-94 / BS512)</name>
    <dbReference type="NCBI Taxonomy" id="344609"/>
    <lineage>
        <taxon>Bacteria</taxon>
        <taxon>Pseudomonadati</taxon>
        <taxon>Pseudomonadota</taxon>
        <taxon>Gammaproteobacteria</taxon>
        <taxon>Enterobacterales</taxon>
        <taxon>Enterobacteriaceae</taxon>
        <taxon>Shigella</taxon>
    </lineage>
</organism>
<dbReference type="EC" id="1.7.1.13" evidence="1"/>
<dbReference type="EMBL" id="CP001063">
    <property type="protein sequence ID" value="ACD09588.1"/>
    <property type="molecule type" value="Genomic_DNA"/>
</dbReference>
<dbReference type="RefSeq" id="WP_000100420.1">
    <property type="nucleotide sequence ID" value="NC_010658.1"/>
</dbReference>
<dbReference type="SMR" id="B2TZD9"/>
<dbReference type="STRING" id="344609.SbBS512_E3078"/>
<dbReference type="GeneID" id="93779204"/>
<dbReference type="KEGG" id="sbc:SbBS512_E3078"/>
<dbReference type="HOGENOM" id="CLU_054738_0_0_6"/>
<dbReference type="UniPathway" id="UPA00392"/>
<dbReference type="Proteomes" id="UP000001030">
    <property type="component" value="Chromosome"/>
</dbReference>
<dbReference type="GO" id="GO:0005737">
    <property type="term" value="C:cytoplasm"/>
    <property type="evidence" value="ECO:0007669"/>
    <property type="project" value="UniProtKB-SubCell"/>
</dbReference>
<dbReference type="GO" id="GO:0033739">
    <property type="term" value="F:preQ1 synthase activity"/>
    <property type="evidence" value="ECO:0007669"/>
    <property type="project" value="UniProtKB-UniRule"/>
</dbReference>
<dbReference type="GO" id="GO:0008616">
    <property type="term" value="P:queuosine biosynthetic process"/>
    <property type="evidence" value="ECO:0007669"/>
    <property type="project" value="UniProtKB-UniRule"/>
</dbReference>
<dbReference type="GO" id="GO:0006400">
    <property type="term" value="P:tRNA modification"/>
    <property type="evidence" value="ECO:0007669"/>
    <property type="project" value="UniProtKB-UniRule"/>
</dbReference>
<dbReference type="FunFam" id="3.30.1130.10:FF:000004">
    <property type="entry name" value="NADPH-dependent 7-cyano-7-deazaguanine reductase"/>
    <property type="match status" value="1"/>
</dbReference>
<dbReference type="FunFam" id="3.30.1130.10:FF:000006">
    <property type="entry name" value="NADPH-dependent 7-cyano-7-deazaguanine reductase"/>
    <property type="match status" value="1"/>
</dbReference>
<dbReference type="Gene3D" id="3.30.1130.10">
    <property type="match status" value="2"/>
</dbReference>
<dbReference type="HAMAP" id="MF_00817">
    <property type="entry name" value="QueF_type2"/>
    <property type="match status" value="1"/>
</dbReference>
<dbReference type="InterPro" id="IPR043133">
    <property type="entry name" value="GTP-CH-I_C/QueF"/>
</dbReference>
<dbReference type="InterPro" id="IPR050084">
    <property type="entry name" value="NADPH_dep_7-cyano-7-deazaG_red"/>
</dbReference>
<dbReference type="InterPro" id="IPR029500">
    <property type="entry name" value="QueF"/>
</dbReference>
<dbReference type="InterPro" id="IPR029139">
    <property type="entry name" value="QueF_N"/>
</dbReference>
<dbReference type="InterPro" id="IPR016428">
    <property type="entry name" value="QueF_type2"/>
</dbReference>
<dbReference type="NCBIfam" id="TIGR03138">
    <property type="entry name" value="QueF"/>
    <property type="match status" value="1"/>
</dbReference>
<dbReference type="PANTHER" id="PTHR34354">
    <property type="entry name" value="NADPH-DEPENDENT 7-CYANO-7-DEAZAGUANINE REDUCTASE"/>
    <property type="match status" value="1"/>
</dbReference>
<dbReference type="PANTHER" id="PTHR34354:SF1">
    <property type="entry name" value="NADPH-DEPENDENT 7-CYANO-7-DEAZAGUANINE REDUCTASE"/>
    <property type="match status" value="1"/>
</dbReference>
<dbReference type="Pfam" id="PF14489">
    <property type="entry name" value="QueF"/>
    <property type="match status" value="1"/>
</dbReference>
<dbReference type="Pfam" id="PF14819">
    <property type="entry name" value="QueF_N"/>
    <property type="match status" value="1"/>
</dbReference>
<dbReference type="PIRSF" id="PIRSF004750">
    <property type="entry name" value="Nitrile_oxidored_YqcD_prd"/>
    <property type="match status" value="1"/>
</dbReference>
<dbReference type="SUPFAM" id="SSF55620">
    <property type="entry name" value="Tetrahydrobiopterin biosynthesis enzymes-like"/>
    <property type="match status" value="1"/>
</dbReference>
<evidence type="ECO:0000255" key="1">
    <source>
        <dbReference type="HAMAP-Rule" id="MF_00817"/>
    </source>
</evidence>
<keyword id="KW-0963">Cytoplasm</keyword>
<keyword id="KW-0521">NADP</keyword>
<keyword id="KW-0560">Oxidoreductase</keyword>
<keyword id="KW-0671">Queuosine biosynthesis</keyword>
<keyword id="KW-1185">Reference proteome</keyword>